<comment type="function">
    <text evidence="1">Transfers the gamma-phosphate of ATP to the 4'-position of a tetraacyldisaccharide 1-phosphate intermediate (termed DS-1-P) to form tetraacyldisaccharide 1,4'-bis-phosphate (lipid IVA).</text>
</comment>
<comment type="catalytic activity">
    <reaction evidence="1">
        <text>a lipid A disaccharide + ATP = a lipid IVA + ADP + H(+)</text>
        <dbReference type="Rhea" id="RHEA:67840"/>
        <dbReference type="ChEBI" id="CHEBI:15378"/>
        <dbReference type="ChEBI" id="CHEBI:30616"/>
        <dbReference type="ChEBI" id="CHEBI:176343"/>
        <dbReference type="ChEBI" id="CHEBI:176425"/>
        <dbReference type="ChEBI" id="CHEBI:456216"/>
        <dbReference type="EC" id="2.7.1.130"/>
    </reaction>
</comment>
<comment type="pathway">
    <text evidence="1">Glycolipid biosynthesis; lipid IV(A) biosynthesis; lipid IV(A) from (3R)-3-hydroxytetradecanoyl-[acyl-carrier-protein] and UDP-N-acetyl-alpha-D-glucosamine: step 6/6.</text>
</comment>
<comment type="similarity">
    <text evidence="1">Belongs to the LpxK family.</text>
</comment>
<organism>
    <name type="scientific">Chlamydia pneumoniae</name>
    <name type="common">Chlamydophila pneumoniae</name>
    <dbReference type="NCBI Taxonomy" id="83558"/>
    <lineage>
        <taxon>Bacteria</taxon>
        <taxon>Pseudomonadati</taxon>
        <taxon>Chlamydiota</taxon>
        <taxon>Chlamydiia</taxon>
        <taxon>Chlamydiales</taxon>
        <taxon>Chlamydiaceae</taxon>
        <taxon>Chlamydia/Chlamydophila group</taxon>
        <taxon>Chlamydia</taxon>
    </lineage>
</organism>
<feature type="chain" id="PRO_0000190920" description="Tetraacyldisaccharide 4'-kinase">
    <location>
        <begin position="1"/>
        <end position="365"/>
    </location>
</feature>
<feature type="binding site" evidence="1">
    <location>
        <begin position="68"/>
        <end position="75"/>
    </location>
    <ligand>
        <name>ATP</name>
        <dbReference type="ChEBI" id="CHEBI:30616"/>
    </ligand>
</feature>
<accession>Q9Z823</accession>
<keyword id="KW-0067">ATP-binding</keyword>
<keyword id="KW-0418">Kinase</keyword>
<keyword id="KW-0441">Lipid A biosynthesis</keyword>
<keyword id="KW-0444">Lipid biosynthesis</keyword>
<keyword id="KW-0443">Lipid metabolism</keyword>
<keyword id="KW-0547">Nucleotide-binding</keyword>
<keyword id="KW-0808">Transferase</keyword>
<protein>
    <recommendedName>
        <fullName evidence="1">Tetraacyldisaccharide 4'-kinase</fullName>
        <ecNumber evidence="1">2.7.1.130</ecNumber>
    </recommendedName>
    <alternativeName>
        <fullName evidence="1">Lipid A 4'-kinase</fullName>
    </alternativeName>
</protein>
<dbReference type="EC" id="2.7.1.130" evidence="1"/>
<dbReference type="EMBL" id="AE001363">
    <property type="protein sequence ID" value="AAD18669.1"/>
    <property type="molecule type" value="Genomic_DNA"/>
</dbReference>
<dbReference type="EMBL" id="AE002161">
    <property type="protein sequence ID" value="AAF38091.1"/>
    <property type="molecule type" value="Genomic_DNA"/>
</dbReference>
<dbReference type="EMBL" id="BA000008">
    <property type="protein sequence ID" value="BAA98735.1"/>
    <property type="molecule type" value="Genomic_DNA"/>
</dbReference>
<dbReference type="EMBL" id="AE009440">
    <property type="protein sequence ID" value="AAP98479.1"/>
    <property type="molecule type" value="Genomic_DNA"/>
</dbReference>
<dbReference type="PIR" id="E86556">
    <property type="entry name" value="E86556"/>
</dbReference>
<dbReference type="PIR" id="H72068">
    <property type="entry name" value="H72068"/>
</dbReference>
<dbReference type="RefSeq" id="NP_224725.1">
    <property type="nucleotide sequence ID" value="NC_000922.1"/>
</dbReference>
<dbReference type="RefSeq" id="WP_010883167.1">
    <property type="nucleotide sequence ID" value="NZ_LN847257.1"/>
</dbReference>
<dbReference type="SMR" id="Q9Z823"/>
<dbReference type="STRING" id="406984.CPK_ORF01044"/>
<dbReference type="GeneID" id="45050571"/>
<dbReference type="KEGG" id="cpa:CP_0223"/>
<dbReference type="KEGG" id="cpj:ycaH"/>
<dbReference type="KEGG" id="cpn:CPn_0529"/>
<dbReference type="KEGG" id="cpt:CpB0550"/>
<dbReference type="PATRIC" id="fig|115713.3.peg.589"/>
<dbReference type="eggNOG" id="COG1663">
    <property type="taxonomic scope" value="Bacteria"/>
</dbReference>
<dbReference type="HOGENOM" id="CLU_038816_6_0_0"/>
<dbReference type="OrthoDB" id="9789797at2"/>
<dbReference type="UniPathway" id="UPA00359">
    <property type="reaction ID" value="UER00482"/>
</dbReference>
<dbReference type="Proteomes" id="UP000000583">
    <property type="component" value="Chromosome"/>
</dbReference>
<dbReference type="Proteomes" id="UP000000801">
    <property type="component" value="Chromosome"/>
</dbReference>
<dbReference type="GO" id="GO:0005886">
    <property type="term" value="C:plasma membrane"/>
    <property type="evidence" value="ECO:0007669"/>
    <property type="project" value="TreeGrafter"/>
</dbReference>
<dbReference type="GO" id="GO:0005524">
    <property type="term" value="F:ATP binding"/>
    <property type="evidence" value="ECO:0007669"/>
    <property type="project" value="UniProtKB-UniRule"/>
</dbReference>
<dbReference type="GO" id="GO:0009029">
    <property type="term" value="F:tetraacyldisaccharide 4'-kinase activity"/>
    <property type="evidence" value="ECO:0007669"/>
    <property type="project" value="UniProtKB-UniRule"/>
</dbReference>
<dbReference type="GO" id="GO:0009245">
    <property type="term" value="P:lipid A biosynthetic process"/>
    <property type="evidence" value="ECO:0007669"/>
    <property type="project" value="UniProtKB-UniRule"/>
</dbReference>
<dbReference type="GO" id="GO:0009244">
    <property type="term" value="P:lipopolysaccharide core region biosynthetic process"/>
    <property type="evidence" value="ECO:0007669"/>
    <property type="project" value="TreeGrafter"/>
</dbReference>
<dbReference type="HAMAP" id="MF_00409">
    <property type="entry name" value="LpxK"/>
    <property type="match status" value="1"/>
</dbReference>
<dbReference type="InterPro" id="IPR003758">
    <property type="entry name" value="LpxK"/>
</dbReference>
<dbReference type="InterPro" id="IPR027417">
    <property type="entry name" value="P-loop_NTPase"/>
</dbReference>
<dbReference type="NCBIfam" id="TIGR00682">
    <property type="entry name" value="lpxK"/>
    <property type="match status" value="1"/>
</dbReference>
<dbReference type="PANTHER" id="PTHR42724">
    <property type="entry name" value="TETRAACYLDISACCHARIDE 4'-KINASE"/>
    <property type="match status" value="1"/>
</dbReference>
<dbReference type="PANTHER" id="PTHR42724:SF1">
    <property type="entry name" value="TETRAACYLDISACCHARIDE 4'-KINASE, MITOCHONDRIAL-RELATED"/>
    <property type="match status" value="1"/>
</dbReference>
<dbReference type="Pfam" id="PF02606">
    <property type="entry name" value="LpxK"/>
    <property type="match status" value="1"/>
</dbReference>
<dbReference type="SUPFAM" id="SSF52540">
    <property type="entry name" value="P-loop containing nucleoside triphosphate hydrolases"/>
    <property type="match status" value="1"/>
</dbReference>
<sequence>MKKRFPSTLFLFYRRVTIAISLEGILGWGWLGSLLSKVFAFLVACWNRFSWSTPYRARSTVISVGNIVVGGAGKTPTVLWLAEALRLRGYSCGVLSRGYKSQSSRQKKLTVVDSKVHSASYVGDEPLLMAEKLPEGSVWVHKDRRISAARAAEKFGILLLDDGLQYRKLHKDVEIAVVNGQDPLGGRAFFPKGRLRDFPLRLKTVDAIIVNGGGKEAGTVVKRVSNAPQIFVKPTIASVVWTHNGERIPKEALRELRVGVFCGLGFPQGFLNMLREEGIHILGKYLLPDHAAITKKELNYFCQQMAMRQGQGLLCTEKDSVKLPRLSGEVSLLPIAKVEMRLSVNQDDTLSLLNMIEQIHKNRGN</sequence>
<proteinExistence type="inferred from homology"/>
<evidence type="ECO:0000255" key="1">
    <source>
        <dbReference type="HAMAP-Rule" id="MF_00409"/>
    </source>
</evidence>
<reference key="1">
    <citation type="journal article" date="1999" name="Nat. Genet.">
        <title>Comparative genomes of Chlamydia pneumoniae and C. trachomatis.</title>
        <authorList>
            <person name="Kalman S."/>
            <person name="Mitchell W.P."/>
            <person name="Marathe R."/>
            <person name="Lammel C.J."/>
            <person name="Fan J."/>
            <person name="Hyman R.W."/>
            <person name="Olinger L."/>
            <person name="Grimwood J."/>
            <person name="Davis R.W."/>
            <person name="Stephens R.S."/>
        </authorList>
    </citation>
    <scope>NUCLEOTIDE SEQUENCE [LARGE SCALE GENOMIC DNA]</scope>
    <source>
        <strain>CWL029</strain>
    </source>
</reference>
<reference key="2">
    <citation type="journal article" date="2000" name="Nucleic Acids Res.">
        <title>Genome sequences of Chlamydia trachomatis MoPn and Chlamydia pneumoniae AR39.</title>
        <authorList>
            <person name="Read T.D."/>
            <person name="Brunham R.C."/>
            <person name="Shen C."/>
            <person name="Gill S.R."/>
            <person name="Heidelberg J.F."/>
            <person name="White O."/>
            <person name="Hickey E.K."/>
            <person name="Peterson J.D."/>
            <person name="Utterback T.R."/>
            <person name="Berry K.J."/>
            <person name="Bass S."/>
            <person name="Linher K.D."/>
            <person name="Weidman J.F."/>
            <person name="Khouri H.M."/>
            <person name="Craven B."/>
            <person name="Bowman C."/>
            <person name="Dodson R.J."/>
            <person name="Gwinn M.L."/>
            <person name="Nelson W.C."/>
            <person name="DeBoy R.T."/>
            <person name="Kolonay J.F."/>
            <person name="McClarty G."/>
            <person name="Salzberg S.L."/>
            <person name="Eisen J.A."/>
            <person name="Fraser C.M."/>
        </authorList>
    </citation>
    <scope>NUCLEOTIDE SEQUENCE [LARGE SCALE GENOMIC DNA]</scope>
    <source>
        <strain>AR39</strain>
    </source>
</reference>
<reference key="3">
    <citation type="journal article" date="2000" name="Nucleic Acids Res.">
        <title>Comparison of whole genome sequences of Chlamydia pneumoniae J138 from Japan and CWL029 from USA.</title>
        <authorList>
            <person name="Shirai M."/>
            <person name="Hirakawa H."/>
            <person name="Kimoto M."/>
            <person name="Tabuchi M."/>
            <person name="Kishi F."/>
            <person name="Ouchi K."/>
            <person name="Shiba T."/>
            <person name="Ishii K."/>
            <person name="Hattori M."/>
            <person name="Kuhara S."/>
            <person name="Nakazawa T."/>
        </authorList>
    </citation>
    <scope>NUCLEOTIDE SEQUENCE [LARGE SCALE GENOMIC DNA]</scope>
    <source>
        <strain>J138</strain>
    </source>
</reference>
<reference key="4">
    <citation type="submission" date="2002-05" db="EMBL/GenBank/DDBJ databases">
        <title>The genome sequence of Chlamydia pneumoniae TW183 and comparison with other Chlamydia strains based on whole genome sequence analysis.</title>
        <authorList>
            <person name="Geng M.M."/>
            <person name="Schuhmacher A."/>
            <person name="Muehldorfer I."/>
            <person name="Bensch K.W."/>
            <person name="Schaefer K.P."/>
            <person name="Schneider S."/>
            <person name="Pohl T."/>
            <person name="Essig A."/>
            <person name="Marre R."/>
            <person name="Melchers K."/>
        </authorList>
    </citation>
    <scope>NUCLEOTIDE SEQUENCE [LARGE SCALE GENOMIC DNA]</scope>
    <source>
        <strain>TW-183</strain>
    </source>
</reference>
<name>LPXK_CHLPN</name>
<gene>
    <name evidence="1" type="primary">lpxK</name>
    <name type="ordered locus">CPn_0529</name>
    <name type="ordered locus">CP_0223</name>
    <name type="ordered locus">CpB0550</name>
</gene>